<feature type="initiator methionine" description="Removed" evidence="1">
    <location>
        <position position="1"/>
    </location>
</feature>
<feature type="chain" id="PRO_0000186144" description="Troponin I, fast skeletal muscle">
    <location>
        <begin position="2"/>
        <end position="182"/>
    </location>
</feature>
<feature type="region of interest" description="Involved in binding TNC">
    <location>
        <begin position="2"/>
        <end position="48"/>
    </location>
</feature>
<feature type="region of interest" description="Disordered" evidence="2">
    <location>
        <begin position="29"/>
        <end position="53"/>
    </location>
</feature>
<feature type="region of interest" description="Involved in binding TNC and actin">
    <location>
        <begin position="97"/>
        <end position="117"/>
    </location>
</feature>
<feature type="compositionally biased region" description="Basic and acidic residues" evidence="2">
    <location>
        <begin position="29"/>
        <end position="45"/>
    </location>
</feature>
<feature type="modified residue" description="N-acetylglycine" evidence="1">
    <location>
        <position position="2"/>
    </location>
</feature>
<feature type="modified residue" description="Phosphothreonine" evidence="1">
    <location>
        <position position="12"/>
    </location>
</feature>
<feature type="modified residue" description="Phosphoserine" evidence="1">
    <location>
        <position position="118"/>
    </location>
</feature>
<dbReference type="EMBL" id="J04992">
    <property type="protein sequence ID" value="AAA40485.1"/>
    <property type="molecule type" value="mRNA"/>
</dbReference>
<dbReference type="EMBL" id="AL603651">
    <property type="status" value="NOT_ANNOTATED_CDS"/>
    <property type="molecule type" value="Genomic_DNA"/>
</dbReference>
<dbReference type="EMBL" id="BC028515">
    <property type="protein sequence ID" value="AAH28515.1"/>
    <property type="molecule type" value="mRNA"/>
</dbReference>
<dbReference type="CCDS" id="CCDS40192.1"/>
<dbReference type="PIR" id="A44786">
    <property type="entry name" value="A44786"/>
</dbReference>
<dbReference type="RefSeq" id="NP_033431.1">
    <property type="nucleotide sequence ID" value="NM_009405.3"/>
</dbReference>
<dbReference type="RefSeq" id="XP_006508602.1">
    <property type="nucleotide sequence ID" value="XM_006508539.3"/>
</dbReference>
<dbReference type="BMRB" id="P13412"/>
<dbReference type="SMR" id="P13412"/>
<dbReference type="BioGRID" id="204265">
    <property type="interactions" value="10"/>
</dbReference>
<dbReference type="FunCoup" id="P13412">
    <property type="interactions" value="124"/>
</dbReference>
<dbReference type="STRING" id="10090.ENSMUSP00000122733"/>
<dbReference type="iPTMnet" id="P13412"/>
<dbReference type="PhosphoSitePlus" id="P13412"/>
<dbReference type="jPOST" id="P13412"/>
<dbReference type="PaxDb" id="10090-ENSMUSP00000122733"/>
<dbReference type="ProteomicsDB" id="259142"/>
<dbReference type="Antibodypedia" id="4359">
    <property type="antibodies" value="450 antibodies from 33 providers"/>
</dbReference>
<dbReference type="DNASU" id="21953"/>
<dbReference type="Ensembl" id="ENSMUST00000105971.8">
    <property type="protein sequence ID" value="ENSMUSP00000101591.2"/>
    <property type="gene ID" value="ENSMUSG00000031097.16"/>
</dbReference>
<dbReference type="Ensembl" id="ENSMUST00000149529.8">
    <property type="protein sequence ID" value="ENSMUSP00000122733.2"/>
    <property type="gene ID" value="ENSMUSG00000031097.16"/>
</dbReference>
<dbReference type="GeneID" id="21953"/>
<dbReference type="KEGG" id="mmu:21953"/>
<dbReference type="UCSC" id="uc033jdj.1">
    <property type="organism name" value="mouse"/>
</dbReference>
<dbReference type="AGR" id="MGI:105070"/>
<dbReference type="CTD" id="7136"/>
<dbReference type="MGI" id="MGI:105070">
    <property type="gene designation" value="Tnni2"/>
</dbReference>
<dbReference type="VEuPathDB" id="HostDB:ENSMUSG00000031097"/>
<dbReference type="eggNOG" id="KOG3977">
    <property type="taxonomic scope" value="Eukaryota"/>
</dbReference>
<dbReference type="GeneTree" id="ENSGT01030000234588"/>
<dbReference type="InParanoid" id="P13412"/>
<dbReference type="OMA" id="KRHRAIT"/>
<dbReference type="OrthoDB" id="49191at9989"/>
<dbReference type="PhylomeDB" id="P13412"/>
<dbReference type="TreeFam" id="TF313374"/>
<dbReference type="Reactome" id="R-MMU-390522">
    <property type="pathway name" value="Striated Muscle Contraction"/>
</dbReference>
<dbReference type="BioGRID-ORCS" id="21953">
    <property type="hits" value="1 hit in 78 CRISPR screens"/>
</dbReference>
<dbReference type="ChiTaRS" id="Tnni2">
    <property type="organism name" value="mouse"/>
</dbReference>
<dbReference type="PRO" id="PR:P13412"/>
<dbReference type="Proteomes" id="UP000000589">
    <property type="component" value="Chromosome 7"/>
</dbReference>
<dbReference type="RNAct" id="P13412">
    <property type="molecule type" value="protein"/>
</dbReference>
<dbReference type="Bgee" id="ENSMUSG00000031097">
    <property type="expression patterns" value="Expressed in digastric muscle group and 131 other cell types or tissues"/>
</dbReference>
<dbReference type="ExpressionAtlas" id="P13412">
    <property type="expression patterns" value="baseline and differential"/>
</dbReference>
<dbReference type="GO" id="GO:0005634">
    <property type="term" value="C:nucleus"/>
    <property type="evidence" value="ECO:0007669"/>
    <property type="project" value="Ensembl"/>
</dbReference>
<dbReference type="GO" id="GO:0005861">
    <property type="term" value="C:troponin complex"/>
    <property type="evidence" value="ECO:0007669"/>
    <property type="project" value="Ensembl"/>
</dbReference>
<dbReference type="GO" id="GO:0003779">
    <property type="term" value="F:actin binding"/>
    <property type="evidence" value="ECO:0007669"/>
    <property type="project" value="UniProtKB-KW"/>
</dbReference>
<dbReference type="GO" id="GO:0031014">
    <property type="term" value="F:troponin T binding"/>
    <property type="evidence" value="ECO:0007669"/>
    <property type="project" value="Ensembl"/>
</dbReference>
<dbReference type="GO" id="GO:0045893">
    <property type="term" value="P:positive regulation of DNA-templated transcription"/>
    <property type="evidence" value="ECO:0007669"/>
    <property type="project" value="Ensembl"/>
</dbReference>
<dbReference type="GO" id="GO:0003009">
    <property type="term" value="P:skeletal muscle contraction"/>
    <property type="evidence" value="ECO:0007669"/>
    <property type="project" value="Ensembl"/>
</dbReference>
<dbReference type="FunFam" id="1.20.5.350:FF:000002">
    <property type="entry name" value="troponin I, fast skeletal muscle"/>
    <property type="match status" value="1"/>
</dbReference>
<dbReference type="Gene3D" id="1.20.5.350">
    <property type="match status" value="1"/>
</dbReference>
<dbReference type="Gene3D" id="6.10.250.180">
    <property type="match status" value="1"/>
</dbReference>
<dbReference type="InterPro" id="IPR001978">
    <property type="entry name" value="Troponin"/>
</dbReference>
<dbReference type="InterPro" id="IPR050875">
    <property type="entry name" value="Troponin_I"/>
</dbReference>
<dbReference type="InterPro" id="IPR038077">
    <property type="entry name" value="Troponin_sf"/>
</dbReference>
<dbReference type="PANTHER" id="PTHR13738">
    <property type="entry name" value="TROPONIN I"/>
    <property type="match status" value="1"/>
</dbReference>
<dbReference type="PANTHER" id="PTHR13738:SF15">
    <property type="entry name" value="TROPONIN I, FAST SKELETAL MUSCLE"/>
    <property type="match status" value="1"/>
</dbReference>
<dbReference type="Pfam" id="PF00992">
    <property type="entry name" value="Troponin"/>
    <property type="match status" value="1"/>
</dbReference>
<dbReference type="SUPFAM" id="SSF90250">
    <property type="entry name" value="Troponin coil-coiled subunits"/>
    <property type="match status" value="1"/>
</dbReference>
<evidence type="ECO:0000250" key="1">
    <source>
        <dbReference type="UniProtKB" id="P02643"/>
    </source>
</evidence>
<evidence type="ECO:0000256" key="2">
    <source>
        <dbReference type="SAM" id="MobiDB-lite"/>
    </source>
</evidence>
<evidence type="ECO:0000305" key="3"/>
<proteinExistence type="evidence at transcript level"/>
<protein>
    <recommendedName>
        <fullName>Troponin I, fast skeletal muscle</fullName>
    </recommendedName>
    <alternativeName>
        <fullName>Troponin I, fast-twitch isoform</fullName>
    </alternativeName>
</protein>
<organism>
    <name type="scientific">Mus musculus</name>
    <name type="common">Mouse</name>
    <dbReference type="NCBI Taxonomy" id="10090"/>
    <lineage>
        <taxon>Eukaryota</taxon>
        <taxon>Metazoa</taxon>
        <taxon>Chordata</taxon>
        <taxon>Craniata</taxon>
        <taxon>Vertebrata</taxon>
        <taxon>Euteleostomi</taxon>
        <taxon>Mammalia</taxon>
        <taxon>Eutheria</taxon>
        <taxon>Euarchontoglires</taxon>
        <taxon>Glires</taxon>
        <taxon>Rodentia</taxon>
        <taxon>Myomorpha</taxon>
        <taxon>Muroidea</taxon>
        <taxon>Muridae</taxon>
        <taxon>Murinae</taxon>
        <taxon>Mus</taxon>
        <taxon>Mus</taxon>
    </lineage>
</organism>
<gene>
    <name type="primary">Tnni2</name>
</gene>
<name>TNNI2_MOUSE</name>
<sequence>MGDEEKRNRAITARRQHLKSVMLQIAATELEKEESRRESEKENYLSEHCPPLHIPGSMSEVQELCKQLHAKIDVAEEEKYDMEVKVQKSSKELEDMNQKLFDLRGKFKRPPLRRVRMSADAMLKALLGSKHKVCMDLRANLKQVKKEDTEKERDLRDVGDWRKNIEEKSGMEGRKKMFESES</sequence>
<reference key="1">
    <citation type="journal article" date="1989" name="J. Biol. Chem.">
        <title>cDNA clone and expression analysis of rodent fast and slow skeletal muscle troponin I mRNAs.</title>
        <authorList>
            <person name="Koppe R.I."/>
            <person name="Hallauer P.L."/>
            <person name="Karpati G."/>
            <person name="Hastings K.E.M."/>
        </authorList>
    </citation>
    <scope>NUCLEOTIDE SEQUENCE [MRNA]</scope>
</reference>
<reference key="2">
    <citation type="journal article" date="2009" name="PLoS Biol.">
        <title>Lineage-specific biology revealed by a finished genome assembly of the mouse.</title>
        <authorList>
            <person name="Church D.M."/>
            <person name="Goodstadt L."/>
            <person name="Hillier L.W."/>
            <person name="Zody M.C."/>
            <person name="Goldstein S."/>
            <person name="She X."/>
            <person name="Bult C.J."/>
            <person name="Agarwala R."/>
            <person name="Cherry J.L."/>
            <person name="DiCuccio M."/>
            <person name="Hlavina W."/>
            <person name="Kapustin Y."/>
            <person name="Meric P."/>
            <person name="Maglott D."/>
            <person name="Birtle Z."/>
            <person name="Marques A.C."/>
            <person name="Graves T."/>
            <person name="Zhou S."/>
            <person name="Teague B."/>
            <person name="Potamousis K."/>
            <person name="Churas C."/>
            <person name="Place M."/>
            <person name="Herschleb J."/>
            <person name="Runnheim R."/>
            <person name="Forrest D."/>
            <person name="Amos-Landgraf J."/>
            <person name="Schwartz D.C."/>
            <person name="Cheng Z."/>
            <person name="Lindblad-Toh K."/>
            <person name="Eichler E.E."/>
            <person name="Ponting C.P."/>
        </authorList>
    </citation>
    <scope>NUCLEOTIDE SEQUENCE [LARGE SCALE GENOMIC DNA]</scope>
    <source>
        <strain>C57BL/6J</strain>
    </source>
</reference>
<reference key="3">
    <citation type="journal article" date="2004" name="Genome Res.">
        <title>The status, quality, and expansion of the NIH full-length cDNA project: the Mammalian Gene Collection (MGC).</title>
        <authorList>
            <consortium name="The MGC Project Team"/>
        </authorList>
    </citation>
    <scope>NUCLEOTIDE SEQUENCE [LARGE SCALE MRNA]</scope>
    <source>
        <strain>C57BL/6J</strain>
        <tissue>Mammary gland</tissue>
    </source>
</reference>
<comment type="function">
    <text>Troponin I is the inhibitory subunit of troponin, the thin filament regulatory complex which confers calcium-sensitivity to striated muscle actomyosin ATPase activity.</text>
</comment>
<comment type="subunit">
    <text>Binds to actin and tropomyosin.</text>
</comment>
<comment type="similarity">
    <text evidence="3">Belongs to the troponin I family.</text>
</comment>
<accession>P13412</accession>
<accession>A2A6J9</accession>
<keyword id="KW-0007">Acetylation</keyword>
<keyword id="KW-0009">Actin-binding</keyword>
<keyword id="KW-0514">Muscle protein</keyword>
<keyword id="KW-0597">Phosphoprotein</keyword>
<keyword id="KW-1185">Reference proteome</keyword>